<keyword id="KW-0007">Acetylation</keyword>
<keyword id="KW-0090">Biological rhythms</keyword>
<keyword id="KW-0238">DNA-binding</keyword>
<keyword id="KW-0413">Isomerase</keyword>
<keyword id="KW-1017">Isopeptide bond</keyword>
<keyword id="KW-0539">Nucleus</keyword>
<keyword id="KW-0597">Phosphoprotein</keyword>
<keyword id="KW-0799">Topoisomerase</keyword>
<keyword id="KW-0832">Ubl conjugation</keyword>
<name>TOP1_CHLAE</name>
<dbReference type="EC" id="5.6.2.1" evidence="5"/>
<dbReference type="EMBL" id="AB089321">
    <property type="protein sequence ID" value="BAC78678.1"/>
    <property type="molecule type" value="mRNA"/>
</dbReference>
<dbReference type="SMR" id="Q7YR26"/>
<dbReference type="BindingDB" id="Q7YR26"/>
<dbReference type="ChEMBL" id="CHEMBL5265"/>
<dbReference type="GO" id="GO:0005694">
    <property type="term" value="C:chromosome"/>
    <property type="evidence" value="ECO:0007669"/>
    <property type="project" value="InterPro"/>
</dbReference>
<dbReference type="GO" id="GO:0005730">
    <property type="term" value="C:nucleolus"/>
    <property type="evidence" value="ECO:0000250"/>
    <property type="project" value="UniProtKB"/>
</dbReference>
<dbReference type="GO" id="GO:0005654">
    <property type="term" value="C:nucleoplasm"/>
    <property type="evidence" value="ECO:0000250"/>
    <property type="project" value="UniProtKB"/>
</dbReference>
<dbReference type="GO" id="GO:0005634">
    <property type="term" value="C:nucleus"/>
    <property type="evidence" value="ECO:0000250"/>
    <property type="project" value="UniProtKB"/>
</dbReference>
<dbReference type="GO" id="GO:0003682">
    <property type="term" value="F:chromatin binding"/>
    <property type="evidence" value="ECO:0000250"/>
    <property type="project" value="UniProtKB"/>
</dbReference>
<dbReference type="GO" id="GO:0003677">
    <property type="term" value="F:DNA binding"/>
    <property type="evidence" value="ECO:0000250"/>
    <property type="project" value="UniProtKB"/>
</dbReference>
<dbReference type="GO" id="GO:0003917">
    <property type="term" value="F:DNA topoisomerase type I (single strand cut, ATP-independent) activity"/>
    <property type="evidence" value="ECO:0000250"/>
    <property type="project" value="UniProtKB"/>
</dbReference>
<dbReference type="GO" id="GO:0000978">
    <property type="term" value="F:RNA polymerase II cis-regulatory region sequence-specific DNA binding"/>
    <property type="evidence" value="ECO:0000250"/>
    <property type="project" value="UniProtKB"/>
</dbReference>
<dbReference type="GO" id="GO:0006338">
    <property type="term" value="P:chromatin remodeling"/>
    <property type="evidence" value="ECO:0000250"/>
    <property type="project" value="UniProtKB"/>
</dbReference>
<dbReference type="GO" id="GO:0007059">
    <property type="term" value="P:chromosome segregation"/>
    <property type="evidence" value="ECO:0007669"/>
    <property type="project" value="TreeGrafter"/>
</dbReference>
<dbReference type="GO" id="GO:0032922">
    <property type="term" value="P:circadian regulation of gene expression"/>
    <property type="evidence" value="ECO:0000250"/>
    <property type="project" value="UniProtKB"/>
</dbReference>
<dbReference type="GO" id="GO:0006260">
    <property type="term" value="P:DNA replication"/>
    <property type="evidence" value="ECO:0007669"/>
    <property type="project" value="TreeGrafter"/>
</dbReference>
<dbReference type="GO" id="GO:0006265">
    <property type="term" value="P:DNA topological change"/>
    <property type="evidence" value="ECO:0000250"/>
    <property type="project" value="UniProtKB"/>
</dbReference>
<dbReference type="CDD" id="cd00659">
    <property type="entry name" value="Topo_IB_C"/>
    <property type="match status" value="1"/>
</dbReference>
<dbReference type="CDD" id="cd03488">
    <property type="entry name" value="Topoisomer_IB_N_htopoI_like"/>
    <property type="match status" value="1"/>
</dbReference>
<dbReference type="FunFam" id="1.10.10.41:FF:000001">
    <property type="entry name" value="DNA topoisomerase I"/>
    <property type="match status" value="1"/>
</dbReference>
<dbReference type="FunFam" id="1.10.132.10:FF:000001">
    <property type="entry name" value="DNA topoisomerase I"/>
    <property type="match status" value="1"/>
</dbReference>
<dbReference type="FunFam" id="2.170.11.10:FF:000002">
    <property type="entry name" value="DNA topoisomerase I"/>
    <property type="match status" value="1"/>
</dbReference>
<dbReference type="FunFam" id="3.90.15.10:FF:000001">
    <property type="entry name" value="DNA topoisomerase I"/>
    <property type="match status" value="1"/>
</dbReference>
<dbReference type="Gene3D" id="1.10.132.10">
    <property type="match status" value="1"/>
</dbReference>
<dbReference type="Gene3D" id="2.170.11.10">
    <property type="entry name" value="DNA Topoisomerase I, domain 2"/>
    <property type="match status" value="1"/>
</dbReference>
<dbReference type="Gene3D" id="3.90.15.10">
    <property type="entry name" value="Topoisomerase I, Chain A, domain 3"/>
    <property type="match status" value="1"/>
</dbReference>
<dbReference type="Gene3D" id="1.10.10.41">
    <property type="entry name" value="Yeast DNA topoisomerase - domain 1"/>
    <property type="match status" value="1"/>
</dbReference>
<dbReference type="InterPro" id="IPR011010">
    <property type="entry name" value="DNA_brk_join_enz"/>
</dbReference>
<dbReference type="InterPro" id="IPR013034">
    <property type="entry name" value="DNA_topo_DNA_db_N_dom1"/>
</dbReference>
<dbReference type="InterPro" id="IPR013030">
    <property type="entry name" value="DNA_topo_DNA_db_N_dom2"/>
</dbReference>
<dbReference type="InterPro" id="IPR001631">
    <property type="entry name" value="TopoI"/>
</dbReference>
<dbReference type="InterPro" id="IPR025834">
    <property type="entry name" value="TopoI_C_dom"/>
</dbReference>
<dbReference type="InterPro" id="IPR014711">
    <property type="entry name" value="TopoI_cat_a-hlx-sub_euk"/>
</dbReference>
<dbReference type="InterPro" id="IPR014727">
    <property type="entry name" value="TopoI_cat_a/b-sub_euk"/>
</dbReference>
<dbReference type="InterPro" id="IPR013500">
    <property type="entry name" value="TopoI_cat_euk"/>
</dbReference>
<dbReference type="InterPro" id="IPR008336">
    <property type="entry name" value="TopoI_DNA-bd_euk"/>
</dbReference>
<dbReference type="InterPro" id="IPR036202">
    <property type="entry name" value="TopoI_DNA-bd_euk_N_sf"/>
</dbReference>
<dbReference type="InterPro" id="IPR013499">
    <property type="entry name" value="TopoI_euk"/>
</dbReference>
<dbReference type="InterPro" id="IPR018521">
    <property type="entry name" value="TopoIB_AS"/>
</dbReference>
<dbReference type="InterPro" id="IPR048045">
    <property type="entry name" value="Topoisomer_I_DNA-bd"/>
</dbReference>
<dbReference type="InterPro" id="IPR051062">
    <property type="entry name" value="Topoisomerase_IB"/>
</dbReference>
<dbReference type="PANTHER" id="PTHR10290:SF5">
    <property type="entry name" value="DNA TOPOISOMERASE 1"/>
    <property type="match status" value="1"/>
</dbReference>
<dbReference type="PANTHER" id="PTHR10290">
    <property type="entry name" value="DNA TOPOISOMERASE I"/>
    <property type="match status" value="1"/>
</dbReference>
<dbReference type="Pfam" id="PF14370">
    <property type="entry name" value="Topo_C_assoc"/>
    <property type="match status" value="1"/>
</dbReference>
<dbReference type="Pfam" id="PF01028">
    <property type="entry name" value="Topoisom_I"/>
    <property type="match status" value="1"/>
</dbReference>
<dbReference type="Pfam" id="PF02919">
    <property type="entry name" value="Topoisom_I_N"/>
    <property type="match status" value="1"/>
</dbReference>
<dbReference type="PRINTS" id="PR00416">
    <property type="entry name" value="EUTPISMRASEI"/>
</dbReference>
<dbReference type="SMART" id="SM00435">
    <property type="entry name" value="TOPEUc"/>
    <property type="match status" value="1"/>
</dbReference>
<dbReference type="SUPFAM" id="SSF56349">
    <property type="entry name" value="DNA breaking-rejoining enzymes"/>
    <property type="match status" value="1"/>
</dbReference>
<dbReference type="SUPFAM" id="SSF46596">
    <property type="entry name" value="Eukaryotic DNA topoisomerase I, dispensable insert domain"/>
    <property type="match status" value="1"/>
</dbReference>
<dbReference type="SUPFAM" id="SSF56741">
    <property type="entry name" value="Eukaryotic DNA topoisomerase I, N-terminal DNA-binding fragment"/>
    <property type="match status" value="1"/>
</dbReference>
<dbReference type="PROSITE" id="PS00176">
    <property type="entry name" value="TOPO_IB_1"/>
    <property type="match status" value="1"/>
</dbReference>
<dbReference type="PROSITE" id="PS52038">
    <property type="entry name" value="TOPO_IB_2"/>
    <property type="match status" value="1"/>
</dbReference>
<proteinExistence type="evidence at transcript level"/>
<protein>
    <recommendedName>
        <fullName>DNA topoisomerase 1</fullName>
        <ecNumber evidence="5">5.6.2.1</ecNumber>
    </recommendedName>
    <alternativeName>
        <fullName>DNA topoisomerase I</fullName>
    </alternativeName>
</protein>
<comment type="function">
    <text evidence="2">Releases the supercoiling and torsional tension of DNA introduced during the DNA replication and transcription by transiently cleaving and rejoining one strand of the DNA duplex. Introduces a single-strand break via transesterification at a target site in duplex DNA. The scissile phosphodiester is attacked by the catalytic tyrosine of the enzyme, resulting in the formation of a DNA-(3'-phosphotyrosyl)-enzyme intermediate and the expulsion of a 5'-OH DNA strand. The free DNA strand then rotates around the intact phosphodiester bond on the opposing strand, thus removing DNA supercoils. Finally, in the religation step, the DNA 5'-OH attacks the covalent intermediate to expel the active-site tyrosine and restore the DNA phosphodiester backbone. Regulates the alternative splicing of tissue factor (F3) pre-mRNA in endothelial cells. Involved in the circadian transcription of the core circadian clock component BMAL1 by altering the chromatin structure around the ROR response elements (ROREs) on the BMAL1 promoter.</text>
</comment>
<comment type="catalytic activity">
    <reaction evidence="5">
        <text>ATP-independent breakage of single-stranded DNA, followed by passage and rejoining.</text>
        <dbReference type="EC" id="5.6.2.1"/>
    </reaction>
</comment>
<comment type="activity regulation">
    <text>Specifically inhibited by camptothecin (CPT), a plant alkaloid with antitumor activity.</text>
</comment>
<comment type="subunit">
    <text evidence="2">Monomer. Interacts with ERCC6. Interacts with TPRN; TPRN interacts with a number of DNA damage response proteins, is recruited to sites of DNA damage and may play a role in DNA damage repair.</text>
</comment>
<comment type="subcellular location">
    <subcellularLocation>
        <location evidence="2">Nucleus</location>
        <location evidence="2">Nucleolus</location>
    </subcellularLocation>
    <subcellularLocation>
        <location evidence="2">Nucleus</location>
        <location evidence="2">Nucleoplasm</location>
    </subcellularLocation>
    <text evidence="2">Diffuse nuclear localization with some enrichment in nucleoli. On CPT treatment, cleared from nucleoli into nucleoplasm. Sumoylated forms found in both nucleoplasm and nucleoli.</text>
</comment>
<comment type="PTM">
    <text evidence="2">Sumoylated. Lys-119 is the main site of sumoylation. Sumoylation plays a role in partitioning TOP1 between nucleoli and nucleoplasm. Levels are dramatically increased on camptothecin (CPT) treatment.</text>
</comment>
<comment type="PTM">
    <text evidence="2">Phosphorylation at Ser-508 by CK2 increases binding to supercoiled DNA and sensitivity to camptothecin.</text>
</comment>
<comment type="miscellaneous">
    <text>Eukaryotic topoisomerase I and II can relax both negative and positive supercoils, whereas prokaryotic enzymes relax only negative supercoils.</text>
</comment>
<comment type="similarity">
    <text evidence="7">Belongs to the type IB topoisomerase family.</text>
</comment>
<gene>
    <name type="primary">TOP1</name>
</gene>
<sequence>MSGDHLHNDSQIEADFRLNDSHKHKDKHKDREHRHKEHKKDKEKDREKSKHSNSEHKDSEKKHKEKEKTKHKDGSSEKHKDKHKDRDKEKRKEEKVRASGDAKIKKEKENGFSSPPQIKDEPEDDGYFVPPKEDIKPLKRPRDEDDADYKPKKIKTEDIKKEKKRKLEEEEDGKLRKPKNKDKDKKVPEPDNKKKKPKKEEEQKWKWWEEERYPEGIKWKFLEHKGPVFAPPYEPLPDSVKFYYDGKVMKLSPKAEEVATFFAKMLDHEYTTKEIFRKNFFKDWRKEMTNEEKNIITNLSKCDFTQMSQYFKAQTEARKQMSKEEKLKIKEENEKLLKEYGFCIMDNHKERIANFKIEPPGLFRGRGNHPKMGMLKRRIMPEDIIINCSKDAKVPSPPPGHKWKEVRHDNKVTWLVSWTENIQGSIKYIMLNPSSRIKGEKDWQKYETARRLKKCVDKIRNQYREDWKSKEMKVRQRAVALYFIDKLALRAGNEKEEGETADTVGCCSLRVEHINLHPELDGQEYVVEFDFLGKDSIRYYNKVPVEKRVFKNLQLFMENKQPEDDLFDRLNTGILNKHLQDLMEGLTAKVFRTYNASITLQQQLKELTAPDENIPAKILSYNRANRAVAILCNHQRAPPKTFEKSMMNLQSKIDAKKEQLADARRDLKSAKADAKVMKDAKTKKVVESKKKAVQRLEEQLMKLEVQATDREENKQIALGTSKLNYLDPRITVAWCKKWGVPIEKIYNKTQREKFAWAIDMADEDYEF</sequence>
<accession>Q7YR26</accession>
<feature type="initiator methionine" description="Removed" evidence="2">
    <location>
        <position position="1"/>
    </location>
</feature>
<feature type="chain" id="PRO_0000145199" description="DNA topoisomerase 1">
    <location>
        <begin position="2"/>
        <end position="767"/>
    </location>
</feature>
<feature type="domain" description="Topo IB-type catalytic" evidence="4">
    <location>
        <begin position="434"/>
        <end position="767"/>
    </location>
</feature>
<feature type="region of interest" description="Disordered" evidence="6">
    <location>
        <begin position="1"/>
        <end position="201"/>
    </location>
</feature>
<feature type="region of interest" description="Interaction with DNA" evidence="1">
    <location>
        <begin position="427"/>
        <end position="428"/>
    </location>
</feature>
<feature type="region of interest" description="Interaction with DNA" evidence="1">
    <location>
        <begin position="490"/>
        <end position="495"/>
    </location>
</feature>
<feature type="region of interest" description="Interaction with DNA" evidence="1">
    <location>
        <begin position="587"/>
        <end position="589"/>
    </location>
</feature>
<feature type="compositionally biased region" description="Basic and acidic residues" evidence="6">
    <location>
        <begin position="1"/>
        <end position="23"/>
    </location>
</feature>
<feature type="compositionally biased region" description="Basic residues" evidence="6">
    <location>
        <begin position="24"/>
        <end position="39"/>
    </location>
</feature>
<feature type="compositionally biased region" description="Basic and acidic residues" evidence="6">
    <location>
        <begin position="40"/>
        <end position="110"/>
    </location>
</feature>
<feature type="compositionally biased region" description="Basic and acidic residues" evidence="6">
    <location>
        <begin position="131"/>
        <end position="168"/>
    </location>
</feature>
<feature type="compositionally biased region" description="Basic and acidic residues" evidence="6">
    <location>
        <begin position="181"/>
        <end position="201"/>
    </location>
</feature>
<feature type="active site" description="O-(3'-phospho-DNA)-tyrosine intermediate" evidence="4 5">
    <location>
        <position position="725"/>
    </location>
</feature>
<feature type="site" description="Interaction with DNA" evidence="1">
    <location>
        <position position="318"/>
    </location>
</feature>
<feature type="site" description="Interaction with DNA" evidence="1">
    <location>
        <position position="366"/>
    </location>
</feature>
<feature type="site" description="Interaction with DNA" evidence="1">
    <location>
        <position position="414"/>
    </location>
</feature>
<feature type="site" description="Interaction with DNA" evidence="1">
    <location>
        <position position="445"/>
    </location>
</feature>
<feature type="site" description="Interaction with DNA" evidence="1">
    <location>
        <position position="503"/>
    </location>
</feature>
<feature type="site" description="Interaction with DNA" evidence="1">
    <location>
        <position position="534"/>
    </location>
</feature>
<feature type="site" description="Interaction with DNA" evidence="1">
    <location>
        <position position="576"/>
    </location>
</feature>
<feature type="site" description="Interaction with DNA" evidence="1">
    <location>
        <position position="634"/>
    </location>
</feature>
<feature type="site" description="Interaction with DNA" evidence="1">
    <location>
        <position position="652"/>
    </location>
</feature>
<feature type="modified residue" description="N-acetylserine" evidence="2">
    <location>
        <position position="2"/>
    </location>
</feature>
<feature type="modified residue" description="Phosphoserine" evidence="2">
    <location>
        <position position="2"/>
    </location>
</feature>
<feature type="modified residue" description="Phosphoserine" evidence="2">
    <location>
        <position position="10"/>
    </location>
</feature>
<feature type="modified residue" description="Phosphoserine" evidence="2">
    <location>
        <position position="59"/>
    </location>
</feature>
<feature type="modified residue" description="Phosphoserine" evidence="2">
    <location>
        <position position="114"/>
    </location>
</feature>
<feature type="modified residue" description="N6-acetyllysine; alternate" evidence="3">
    <location>
        <position position="174"/>
    </location>
</feature>
<feature type="modified residue" description="N6-acetyllysine" evidence="2">
    <location>
        <position position="282"/>
    </location>
</feature>
<feature type="modified residue" description="Phosphoserine; by CK2" evidence="2">
    <location>
        <position position="508"/>
    </location>
</feature>
<feature type="cross-link" description="Glycyl lysine isopeptide (Lys-Gly) (interchain with G-Cter in SUMO2)" evidence="2">
    <location>
        <position position="103"/>
    </location>
</feature>
<feature type="cross-link" description="Glycyl lysine isopeptide (Lys-Gly) (interchain with G-Cter in SUMO); alternate" evidence="7">
    <location>
        <position position="105"/>
    </location>
</feature>
<feature type="cross-link" description="Glycyl lysine isopeptide (Lys-Gly) (interchain with G-Cter in SUMO2); alternate" evidence="2">
    <location>
        <position position="105"/>
    </location>
</feature>
<feature type="cross-link" description="Glycyl lysine isopeptide (Lys-Gly) (interchain with G-Cter in SUMO); alternate" evidence="1">
    <location>
        <position position="119"/>
    </location>
</feature>
<feature type="cross-link" description="Glycyl lysine isopeptide (Lys-Gly) (interchain with G-Cter in SUMO1); alternate" evidence="2">
    <location>
        <position position="119"/>
    </location>
</feature>
<feature type="cross-link" description="Glycyl lysine isopeptide (Lys-Gly) (interchain with G-Cter in SUMO2); alternate" evidence="2">
    <location>
        <position position="119"/>
    </location>
</feature>
<feature type="cross-link" description="Glycyl lysine isopeptide (Lys-Gly) (interchain with G-Cter in SUMO2)" evidence="2">
    <location>
        <position position="136"/>
    </location>
</feature>
<feature type="cross-link" description="Glycyl lysine isopeptide (Lys-Gly) (interchain with G-Cter in SUMO2)" evidence="2">
    <location>
        <position position="150"/>
    </location>
</feature>
<feature type="cross-link" description="Glycyl lysine isopeptide (Lys-Gly) (interchain with G-Cter in SUMO); alternate" evidence="7">
    <location>
        <position position="155"/>
    </location>
</feature>
<feature type="cross-link" description="Glycyl lysine isopeptide (Lys-Gly) (interchain with G-Cter in SUMO2); alternate" evidence="2">
    <location>
        <position position="155"/>
    </location>
</feature>
<feature type="cross-link" description="Glycyl lysine isopeptide (Lys-Gly) (interchain with G-Cter in SUMO2)" evidence="2">
    <location>
        <position position="160"/>
    </location>
</feature>
<feature type="cross-link" description="Glycyl lysine isopeptide (Lys-Gly) (interchain with G-Cter in SUMO2)" evidence="2">
    <location>
        <position position="166"/>
    </location>
</feature>
<feature type="cross-link" description="Glycyl lysine isopeptide (Lys-Gly) (interchain with G-Cter in SUMO2); alternate" evidence="2">
    <location>
        <position position="174"/>
    </location>
</feature>
<feature type="cross-link" description="Glycyl lysine isopeptide (Lys-Gly) (interchain with G-Cter in SUMO2)" evidence="2">
    <location>
        <position position="206"/>
    </location>
</feature>
<feature type="cross-link" description="Glycyl lysine isopeptide (Lys-Gly) (interchain with G-Cter in SUMO2)" evidence="2">
    <location>
        <position position="338"/>
    </location>
</feature>
<feature type="cross-link" description="Glycyl lysine isopeptide (Lys-Gly) (interchain with G-Cter in SUMO2)" evidence="2">
    <location>
        <position position="551"/>
    </location>
</feature>
<feature type="cross-link" description="Glycyl lysine isopeptide (Lys-Gly) (interchain with G-Cter in SUMO2)" evidence="2">
    <location>
        <position position="644"/>
    </location>
</feature>
<feature type="cross-link" description="Glycyl lysine isopeptide (Lys-Gly) (interchain with G-Cter in SUMO2)" evidence="2">
    <location>
        <position position="702"/>
    </location>
</feature>
<feature type="cross-link" description="Glycyl lysine isopeptide (Lys-Gly) (interchain with G-Cter in SUMO2)" evidence="2">
    <location>
        <position position="714"/>
    </location>
</feature>
<reference key="1">
    <citation type="journal article" date="2003" name="Proc. Natl. Acad. Sci. U.S.A.">
        <title>Human topoisomerase I promotes HIV-1 proviral DNA synthesis: Implications for the species specificity and cellular tropism of HIV-1 infection.</title>
        <authorList>
            <person name="Shoya Y."/>
            <person name="Tokunaga K."/>
            <person name="Sawa H."/>
            <person name="Maeda M."/>
            <person name="Ueno T."/>
            <person name="Yoshikawa T."/>
            <person name="Hasegawa H."/>
            <person name="Sata T."/>
            <person name="Kurata T."/>
            <person name="Hall W.W."/>
            <person name="Cullen B.R."/>
            <person name="Takahashi H."/>
        </authorList>
    </citation>
    <scope>NUCLEOTIDE SEQUENCE [MRNA]</scope>
</reference>
<evidence type="ECO:0000250" key="1"/>
<evidence type="ECO:0000250" key="2">
    <source>
        <dbReference type="UniProtKB" id="P11387"/>
    </source>
</evidence>
<evidence type="ECO:0000250" key="3">
    <source>
        <dbReference type="UniProtKB" id="Q04750"/>
    </source>
</evidence>
<evidence type="ECO:0000255" key="4">
    <source>
        <dbReference type="PROSITE-ProRule" id="PRU01382"/>
    </source>
</evidence>
<evidence type="ECO:0000255" key="5">
    <source>
        <dbReference type="PROSITE-ProRule" id="PRU10130"/>
    </source>
</evidence>
<evidence type="ECO:0000256" key="6">
    <source>
        <dbReference type="SAM" id="MobiDB-lite"/>
    </source>
</evidence>
<evidence type="ECO:0000305" key="7"/>
<organism>
    <name type="scientific">Chlorocebus aethiops</name>
    <name type="common">Green monkey</name>
    <name type="synonym">Cercopithecus aethiops</name>
    <dbReference type="NCBI Taxonomy" id="9534"/>
    <lineage>
        <taxon>Eukaryota</taxon>
        <taxon>Metazoa</taxon>
        <taxon>Chordata</taxon>
        <taxon>Craniata</taxon>
        <taxon>Vertebrata</taxon>
        <taxon>Euteleostomi</taxon>
        <taxon>Mammalia</taxon>
        <taxon>Eutheria</taxon>
        <taxon>Euarchontoglires</taxon>
        <taxon>Primates</taxon>
        <taxon>Haplorrhini</taxon>
        <taxon>Catarrhini</taxon>
        <taxon>Cercopithecidae</taxon>
        <taxon>Cercopithecinae</taxon>
        <taxon>Chlorocebus</taxon>
    </lineage>
</organism>